<dbReference type="EC" id="6.3.2.6" evidence="1"/>
<dbReference type="EMBL" id="CP001111">
    <property type="protein sequence ID" value="ACF53426.1"/>
    <property type="molecule type" value="Genomic_DNA"/>
</dbReference>
<dbReference type="RefSeq" id="WP_006399041.1">
    <property type="nucleotide sequence ID" value="NC_011071.1"/>
</dbReference>
<dbReference type="SMR" id="B4SLF7"/>
<dbReference type="STRING" id="391008.Smal_3727"/>
<dbReference type="KEGG" id="smt:Smal_3727"/>
<dbReference type="eggNOG" id="COG0152">
    <property type="taxonomic scope" value="Bacteria"/>
</dbReference>
<dbReference type="HOGENOM" id="CLU_045637_0_2_6"/>
<dbReference type="UniPathway" id="UPA00074">
    <property type="reaction ID" value="UER00131"/>
</dbReference>
<dbReference type="Proteomes" id="UP000001867">
    <property type="component" value="Chromosome"/>
</dbReference>
<dbReference type="GO" id="GO:0005737">
    <property type="term" value="C:cytoplasm"/>
    <property type="evidence" value="ECO:0007669"/>
    <property type="project" value="TreeGrafter"/>
</dbReference>
<dbReference type="GO" id="GO:0005524">
    <property type="term" value="F:ATP binding"/>
    <property type="evidence" value="ECO:0007669"/>
    <property type="project" value="UniProtKB-KW"/>
</dbReference>
<dbReference type="GO" id="GO:0004639">
    <property type="term" value="F:phosphoribosylaminoimidazolesuccinocarboxamide synthase activity"/>
    <property type="evidence" value="ECO:0007669"/>
    <property type="project" value="UniProtKB-UniRule"/>
</dbReference>
<dbReference type="GO" id="GO:0006189">
    <property type="term" value="P:'de novo' IMP biosynthetic process"/>
    <property type="evidence" value="ECO:0007669"/>
    <property type="project" value="UniProtKB-UniRule"/>
</dbReference>
<dbReference type="CDD" id="cd01414">
    <property type="entry name" value="SAICAR_synt_Sc"/>
    <property type="match status" value="1"/>
</dbReference>
<dbReference type="FunFam" id="3.30.200.20:FF:000365">
    <property type="entry name" value="Phosphoribosylaminoimidazole-succinocarboxamide synthase"/>
    <property type="match status" value="1"/>
</dbReference>
<dbReference type="FunFam" id="3.30.470.20:FF:000015">
    <property type="entry name" value="Phosphoribosylaminoimidazole-succinocarboxamide synthase"/>
    <property type="match status" value="1"/>
</dbReference>
<dbReference type="Gene3D" id="3.30.470.20">
    <property type="entry name" value="ATP-grasp fold, B domain"/>
    <property type="match status" value="1"/>
</dbReference>
<dbReference type="Gene3D" id="3.30.200.20">
    <property type="entry name" value="Phosphorylase Kinase, domain 1"/>
    <property type="match status" value="1"/>
</dbReference>
<dbReference type="HAMAP" id="MF_00137">
    <property type="entry name" value="SAICAR_synth"/>
    <property type="match status" value="1"/>
</dbReference>
<dbReference type="InterPro" id="IPR028923">
    <property type="entry name" value="SAICAR_synt/ADE2_N"/>
</dbReference>
<dbReference type="InterPro" id="IPR001636">
    <property type="entry name" value="SAICAR_synth"/>
</dbReference>
<dbReference type="InterPro" id="IPR018236">
    <property type="entry name" value="SAICAR_synthetase_CS"/>
</dbReference>
<dbReference type="NCBIfam" id="NF010568">
    <property type="entry name" value="PRK13961.1"/>
    <property type="match status" value="1"/>
</dbReference>
<dbReference type="NCBIfam" id="TIGR00081">
    <property type="entry name" value="purC"/>
    <property type="match status" value="1"/>
</dbReference>
<dbReference type="PANTHER" id="PTHR43700">
    <property type="entry name" value="PHOSPHORIBOSYLAMINOIMIDAZOLE-SUCCINOCARBOXAMIDE SYNTHASE"/>
    <property type="match status" value="1"/>
</dbReference>
<dbReference type="PANTHER" id="PTHR43700:SF1">
    <property type="entry name" value="PHOSPHORIBOSYLAMINOIMIDAZOLE-SUCCINOCARBOXAMIDE SYNTHASE"/>
    <property type="match status" value="1"/>
</dbReference>
<dbReference type="Pfam" id="PF01259">
    <property type="entry name" value="SAICAR_synt"/>
    <property type="match status" value="1"/>
</dbReference>
<dbReference type="SUPFAM" id="SSF56104">
    <property type="entry name" value="SAICAR synthase-like"/>
    <property type="match status" value="1"/>
</dbReference>
<dbReference type="PROSITE" id="PS01057">
    <property type="entry name" value="SAICAR_SYNTHETASE_1"/>
    <property type="match status" value="1"/>
</dbReference>
<dbReference type="PROSITE" id="PS01058">
    <property type="entry name" value="SAICAR_SYNTHETASE_2"/>
    <property type="match status" value="1"/>
</dbReference>
<protein>
    <recommendedName>
        <fullName evidence="1">Phosphoribosylaminoimidazole-succinocarboxamide synthase</fullName>
        <ecNumber evidence="1">6.3.2.6</ecNumber>
    </recommendedName>
    <alternativeName>
        <fullName evidence="1">SAICAR synthetase</fullName>
    </alternativeName>
</protein>
<comment type="catalytic activity">
    <reaction evidence="1">
        <text>5-amino-1-(5-phospho-D-ribosyl)imidazole-4-carboxylate + L-aspartate + ATP = (2S)-2-[5-amino-1-(5-phospho-beta-D-ribosyl)imidazole-4-carboxamido]succinate + ADP + phosphate + 2 H(+)</text>
        <dbReference type="Rhea" id="RHEA:22628"/>
        <dbReference type="ChEBI" id="CHEBI:15378"/>
        <dbReference type="ChEBI" id="CHEBI:29991"/>
        <dbReference type="ChEBI" id="CHEBI:30616"/>
        <dbReference type="ChEBI" id="CHEBI:43474"/>
        <dbReference type="ChEBI" id="CHEBI:58443"/>
        <dbReference type="ChEBI" id="CHEBI:77657"/>
        <dbReference type="ChEBI" id="CHEBI:456216"/>
        <dbReference type="EC" id="6.3.2.6"/>
    </reaction>
</comment>
<comment type="pathway">
    <text evidence="1">Purine metabolism; IMP biosynthesis via de novo pathway; 5-amino-1-(5-phospho-D-ribosyl)imidazole-4-carboxamide from 5-amino-1-(5-phospho-D-ribosyl)imidazole-4-carboxylate: step 1/2.</text>
</comment>
<comment type="similarity">
    <text evidence="1">Belongs to the SAICAR synthetase family.</text>
</comment>
<keyword id="KW-0067">ATP-binding</keyword>
<keyword id="KW-0436">Ligase</keyword>
<keyword id="KW-0547">Nucleotide-binding</keyword>
<keyword id="KW-0658">Purine biosynthesis</keyword>
<feature type="chain" id="PRO_1000096019" description="Phosphoribosylaminoimidazole-succinocarboxamide synthase">
    <location>
        <begin position="1"/>
        <end position="308"/>
    </location>
</feature>
<name>PUR7_STRM5</name>
<reference key="1">
    <citation type="submission" date="2008-06" db="EMBL/GenBank/DDBJ databases">
        <title>Complete sequence of Stenotrophomonas maltophilia R551-3.</title>
        <authorList>
            <consortium name="US DOE Joint Genome Institute"/>
            <person name="Lucas S."/>
            <person name="Copeland A."/>
            <person name="Lapidus A."/>
            <person name="Glavina del Rio T."/>
            <person name="Dalin E."/>
            <person name="Tice H."/>
            <person name="Pitluck S."/>
            <person name="Chain P."/>
            <person name="Malfatti S."/>
            <person name="Shin M."/>
            <person name="Vergez L."/>
            <person name="Lang D."/>
            <person name="Schmutz J."/>
            <person name="Larimer F."/>
            <person name="Land M."/>
            <person name="Hauser L."/>
            <person name="Kyrpides N."/>
            <person name="Mikhailova N."/>
            <person name="Taghavi S."/>
            <person name="Monchy S."/>
            <person name="Newman L."/>
            <person name="Vangronsveld J."/>
            <person name="van der Lelie D."/>
            <person name="Richardson P."/>
        </authorList>
    </citation>
    <scope>NUCLEOTIDE SEQUENCE [LARGE SCALE GENOMIC DNA]</scope>
    <source>
        <strain>R551-3</strain>
    </source>
</reference>
<gene>
    <name evidence="1" type="primary">purC</name>
    <name type="ordered locus">Smal_3727</name>
</gene>
<evidence type="ECO:0000255" key="1">
    <source>
        <dbReference type="HAMAP-Rule" id="MF_00137"/>
    </source>
</evidence>
<organism>
    <name type="scientific">Stenotrophomonas maltophilia (strain R551-3)</name>
    <dbReference type="NCBI Taxonomy" id="391008"/>
    <lineage>
        <taxon>Bacteria</taxon>
        <taxon>Pseudomonadati</taxon>
        <taxon>Pseudomonadota</taxon>
        <taxon>Gammaproteobacteria</taxon>
        <taxon>Lysobacterales</taxon>
        <taxon>Lysobacteraceae</taxon>
        <taxon>Stenotrophomonas</taxon>
        <taxon>Stenotrophomonas maltophilia group</taxon>
    </lineage>
</organism>
<accession>B4SLF7</accession>
<sequence length="308" mass="34149">MPTTLLQSDLPGLPLRHRGKVRDVFDIPRERLPAGTPPGDYLLMVATDRLSAFDVVLPDPIPGKGEMLCQVSNFWFAKTAHLMPNHLTGIDVASVLPEGVDPALYAKRAVVTRKLKPVPVEAIARGYLIGSGWKDYQRTGKVSGIDLPDGLRQAEQLPEPIFTPSTKAAVGDHDENIDFDAMVKQVGAEMAERVRDATLRIYKFAADYARERGIILADTKFEFGTDADGRLYIMDEMLTPDSSRYWPADEYEVGTSPPSYDKQFVRDYLETLDWGKTAPGPTIPAEIIERTRAKYGEALQRLAGISVD</sequence>
<proteinExistence type="inferred from homology"/>